<gene>
    <name evidence="7" type="primary">TPS5</name>
</gene>
<proteinExistence type="evidence at protein level"/>
<sequence length="601" mass="70037">MSTISIHHVGILRNPLHSKSKRASINKPWSLSLPRSSSASRLVEPCRVSSKTDTKPAEITRRSGNYEPSLWDFDFIQSLDNHHPYVKEKQLKREEELIVQVKMLLGTKMEAVKQLELIDDLKNLGLSYFFRDEIKTILTSIYNNSFENKNNQVGDLYFTSLGFRLLRQHGFNVSQDIFDCFKNEKGSDFDETLIGEDTKATLQLYEVSFHLREGENTLELARQISTKYLQKQVNEGRISDENLSLWIRHSLDLPLHWRIQRLEARWFLDAYAAREDKNPLIFKLAKLDFNIIQATQQEELKEVSRWWNDSCLAEKLPFVRDRVVESYFWGVGLFEGHEFGYQRKLTAAYILLISAIDDVYDVYGTLDELRLFTDVFRRWDTESIDQLPYYMQLCYLALHNYVSGVAYDILKDHRRNTIPYLQETWVELVEAYMKEAEWYQSGYTPSLEEYLTIAKISIGSLPILLSVELSLPDSTIDRATFDRRHKMFYLSATVSRLADDLGTAPSELERGDVPKAIQCYMKDTNASEEEAQGHVRFMIREAWKELNTAMAEPDDCPFTEQVVEATANIGRAAQYIYREGDGHGHFQIRQHVRNLFFHPYV</sequence>
<organism>
    <name type="scientific">Thymus caespititius</name>
    <name type="common">Cretan thyme</name>
    <name type="synonym">Origanum caespititium</name>
    <dbReference type="NCBI Taxonomy" id="751871"/>
    <lineage>
        <taxon>Eukaryota</taxon>
        <taxon>Viridiplantae</taxon>
        <taxon>Streptophyta</taxon>
        <taxon>Embryophyta</taxon>
        <taxon>Tracheophyta</taxon>
        <taxon>Spermatophyta</taxon>
        <taxon>Magnoliopsida</taxon>
        <taxon>eudicotyledons</taxon>
        <taxon>Gunneridae</taxon>
        <taxon>Pentapetalae</taxon>
        <taxon>asterids</taxon>
        <taxon>lamiids</taxon>
        <taxon>Lamiales</taxon>
        <taxon>Lamiaceae</taxon>
        <taxon>Nepetoideae</taxon>
        <taxon>Mentheae</taxon>
        <taxon>Thymus</taxon>
    </lineage>
</organism>
<dbReference type="EC" id="4.2.3.-" evidence="6"/>
<dbReference type="EMBL" id="KC181095">
    <property type="protein sequence ID" value="AGK88250.1"/>
    <property type="molecule type" value="Genomic_DNA"/>
</dbReference>
<dbReference type="EMBL" id="KC181102">
    <property type="protein sequence ID" value="AGK88257.1"/>
    <property type="molecule type" value="mRNA"/>
</dbReference>
<dbReference type="EMBL" id="KC181105">
    <property type="protein sequence ID" value="AGK88260.1"/>
    <property type="molecule type" value="mRNA"/>
</dbReference>
<dbReference type="SMR" id="R4JJJ1"/>
<dbReference type="UniPathway" id="UPA00213"/>
<dbReference type="GO" id="GO:0009507">
    <property type="term" value="C:chloroplast"/>
    <property type="evidence" value="ECO:0007669"/>
    <property type="project" value="UniProtKB-SubCell"/>
</dbReference>
<dbReference type="GO" id="GO:0000287">
    <property type="term" value="F:magnesium ion binding"/>
    <property type="evidence" value="ECO:0007669"/>
    <property type="project" value="InterPro"/>
</dbReference>
<dbReference type="GO" id="GO:0042803">
    <property type="term" value="F:protein homodimerization activity"/>
    <property type="evidence" value="ECO:0000250"/>
    <property type="project" value="UniProtKB"/>
</dbReference>
<dbReference type="GO" id="GO:0010333">
    <property type="term" value="F:terpene synthase activity"/>
    <property type="evidence" value="ECO:0007669"/>
    <property type="project" value="InterPro"/>
</dbReference>
<dbReference type="GO" id="GO:0016102">
    <property type="term" value="P:diterpenoid biosynthetic process"/>
    <property type="evidence" value="ECO:0007669"/>
    <property type="project" value="InterPro"/>
</dbReference>
<dbReference type="CDD" id="cd00684">
    <property type="entry name" value="Terpene_cyclase_plant_C1"/>
    <property type="match status" value="1"/>
</dbReference>
<dbReference type="FunFam" id="1.10.600.10:FF:000007">
    <property type="entry name" value="Isoprene synthase, chloroplastic"/>
    <property type="match status" value="1"/>
</dbReference>
<dbReference type="FunFam" id="1.50.10.130:FF:000001">
    <property type="entry name" value="Isoprene synthase, chloroplastic"/>
    <property type="match status" value="1"/>
</dbReference>
<dbReference type="Gene3D" id="1.10.600.10">
    <property type="entry name" value="Farnesyl Diphosphate Synthase"/>
    <property type="match status" value="1"/>
</dbReference>
<dbReference type="Gene3D" id="1.50.10.130">
    <property type="entry name" value="Terpene synthase, N-terminal domain"/>
    <property type="match status" value="1"/>
</dbReference>
<dbReference type="InterPro" id="IPR008949">
    <property type="entry name" value="Isoprenoid_synthase_dom_sf"/>
</dbReference>
<dbReference type="InterPro" id="IPR034741">
    <property type="entry name" value="Terpene_cyclase-like_1_C"/>
</dbReference>
<dbReference type="InterPro" id="IPR044814">
    <property type="entry name" value="Terpene_cyclase_plant_C1"/>
</dbReference>
<dbReference type="InterPro" id="IPR001906">
    <property type="entry name" value="Terpene_synth_N"/>
</dbReference>
<dbReference type="InterPro" id="IPR036965">
    <property type="entry name" value="Terpene_synth_N_sf"/>
</dbReference>
<dbReference type="InterPro" id="IPR050148">
    <property type="entry name" value="Terpene_synthase-like"/>
</dbReference>
<dbReference type="InterPro" id="IPR005630">
    <property type="entry name" value="Terpene_synthase_metal-bd"/>
</dbReference>
<dbReference type="InterPro" id="IPR008930">
    <property type="entry name" value="Terpenoid_cyclase/PrenylTrfase"/>
</dbReference>
<dbReference type="PANTHER" id="PTHR31225">
    <property type="entry name" value="OS04G0344100 PROTEIN-RELATED"/>
    <property type="match status" value="1"/>
</dbReference>
<dbReference type="PANTHER" id="PTHR31225:SF9">
    <property type="entry name" value="TERPENE SYNTHASE 10"/>
    <property type="match status" value="1"/>
</dbReference>
<dbReference type="Pfam" id="PF01397">
    <property type="entry name" value="Terpene_synth"/>
    <property type="match status" value="1"/>
</dbReference>
<dbReference type="Pfam" id="PF03936">
    <property type="entry name" value="Terpene_synth_C"/>
    <property type="match status" value="1"/>
</dbReference>
<dbReference type="SFLD" id="SFLDS00005">
    <property type="entry name" value="Isoprenoid_Synthase_Type_I"/>
    <property type="match status" value="1"/>
</dbReference>
<dbReference type="SFLD" id="SFLDG01019">
    <property type="entry name" value="Terpene_Cyclase_Like_1_C_Termi"/>
    <property type="match status" value="1"/>
</dbReference>
<dbReference type="SUPFAM" id="SSF48239">
    <property type="entry name" value="Terpenoid cyclases/Protein prenyltransferases"/>
    <property type="match status" value="1"/>
</dbReference>
<dbReference type="SUPFAM" id="SSF48576">
    <property type="entry name" value="Terpenoid synthases"/>
    <property type="match status" value="1"/>
</dbReference>
<keyword id="KW-0025">Alternative splicing</keyword>
<keyword id="KW-0150">Chloroplast</keyword>
<keyword id="KW-0456">Lyase</keyword>
<keyword id="KW-0460">Magnesium</keyword>
<keyword id="KW-0464">Manganese</keyword>
<keyword id="KW-0479">Metal-binding</keyword>
<keyword id="KW-0934">Plastid</keyword>
<keyword id="KW-0809">Transit peptide</keyword>
<protein>
    <recommendedName>
        <fullName evidence="7">Alpha-terpineol synthase, chloroplastic</fullName>
        <ecNumber evidence="6">4.2.3.-</ecNumber>
    </recommendedName>
    <alternativeName>
        <fullName evidence="7">Terpene synthase 5</fullName>
        <shortName evidence="7">TcTPS5</shortName>
    </alternativeName>
</protein>
<comment type="function">
    <text evidence="6">Involved in the biosynthesis of phenolic monoterpenes natural products (PubMed:23624978). Monoterpene synthase which catalyzes the conversion of geranyl diphosphate (GPP) to alpha-terpineol (isomer is not determined) (PubMed:23624978).</text>
</comment>
<comment type="catalytic activity">
    <reaction evidence="6">
        <text>(2E)-geranyl diphosphate + H2O = (S)-alpha-terpineol + diphosphate</text>
        <dbReference type="Rhea" id="RHEA:32551"/>
        <dbReference type="ChEBI" id="CHEBI:128"/>
        <dbReference type="ChEBI" id="CHEBI:15377"/>
        <dbReference type="ChEBI" id="CHEBI:33019"/>
        <dbReference type="ChEBI" id="CHEBI:58057"/>
    </reaction>
    <physiologicalReaction direction="left-to-right" evidence="6">
        <dbReference type="Rhea" id="RHEA:32552"/>
    </physiologicalReaction>
</comment>
<comment type="catalytic activity">
    <reaction evidence="6">
        <text>(2E)-geranyl diphosphate + H2O = (R)-alpha-terpineol + diphosphate</text>
        <dbReference type="Rhea" id="RHEA:32555"/>
        <dbReference type="ChEBI" id="CHEBI:300"/>
        <dbReference type="ChEBI" id="CHEBI:15377"/>
        <dbReference type="ChEBI" id="CHEBI:33019"/>
        <dbReference type="ChEBI" id="CHEBI:58057"/>
    </reaction>
    <physiologicalReaction direction="left-to-right" evidence="6">
        <dbReference type="Rhea" id="RHEA:32556"/>
    </physiologicalReaction>
</comment>
<comment type="cofactor">
    <cofactor evidence="3">
        <name>Mn(2+)</name>
        <dbReference type="ChEBI" id="CHEBI:29035"/>
    </cofactor>
    <cofactor evidence="3">
        <name>Mg(2+)</name>
        <dbReference type="ChEBI" id="CHEBI:18420"/>
    </cofactor>
    <text evidence="3">Binds 3 Mg(2+) or Mn(2+) ions per subunit.</text>
</comment>
<comment type="pathway">
    <text evidence="6">Secondary metabolite biosynthesis; terpenoid biosynthesis.</text>
</comment>
<comment type="subunit">
    <text evidence="1">Homodimer.</text>
</comment>
<comment type="subcellular location">
    <subcellularLocation>
        <location evidence="5">Plastid</location>
        <location evidence="5">Chloroplast</location>
    </subcellularLocation>
</comment>
<comment type="alternative products">
    <event type="alternative splicing"/>
    <isoform>
        <id>R4JJJ1-1</id>
        <name>1</name>
        <sequence type="displayed"/>
    </isoform>
    <isoform>
        <id>R4JJJ1-2</id>
        <name>2</name>
        <sequence type="described" ref="VSP_061124"/>
    </isoform>
</comment>
<comment type="domain">
    <text evidence="4">The Asp-Asp-Xaa-Xaa-Asp/Glu (DDXXD/E) motif is important for the catalytic activity, presumably through binding to Mg(2+).</text>
</comment>
<comment type="similarity">
    <text evidence="8">Belongs to the terpene synthase family.</text>
</comment>
<accession>R4JJJ1</accession>
<accession>R4JND2</accession>
<accession>R4JNE4</accession>
<feature type="transit peptide" description="Chloroplast" evidence="5">
    <location>
        <begin position="1"/>
        <end position="47"/>
    </location>
</feature>
<feature type="chain" id="PRO_0000453317" description="Alpha-terpineol synthase, chloroplastic">
    <location>
        <begin position="48"/>
        <end position="601"/>
    </location>
</feature>
<feature type="region of interest" description="Homodimerization" evidence="1">
    <location>
        <begin position="363"/>
        <end position="369"/>
    </location>
</feature>
<feature type="region of interest" description="Homodimerization" evidence="1">
    <location>
        <begin position="435"/>
        <end position="471"/>
    </location>
</feature>
<feature type="short sequence motif" description="DDXXD motif" evidence="4">
    <location>
        <begin position="357"/>
        <end position="361"/>
    </location>
</feature>
<feature type="binding site" evidence="2">
    <location>
        <position position="357"/>
    </location>
    <ligand>
        <name>Mn(2+)</name>
        <dbReference type="ChEBI" id="CHEBI:29035"/>
        <label>1</label>
    </ligand>
</feature>
<feature type="binding site" evidence="2">
    <location>
        <position position="357"/>
    </location>
    <ligand>
        <name>Mn(2+)</name>
        <dbReference type="ChEBI" id="CHEBI:29035"/>
        <label>2</label>
    </ligand>
</feature>
<feature type="binding site" evidence="2">
    <location>
        <position position="361"/>
    </location>
    <ligand>
        <name>Mn(2+)</name>
        <dbReference type="ChEBI" id="CHEBI:29035"/>
        <label>1</label>
    </ligand>
</feature>
<feature type="binding site" evidence="2">
    <location>
        <position position="361"/>
    </location>
    <ligand>
        <name>Mn(2+)</name>
        <dbReference type="ChEBI" id="CHEBI:29035"/>
        <label>2</label>
    </ligand>
</feature>
<feature type="binding site" evidence="2">
    <location>
        <position position="499"/>
    </location>
    <ligand>
        <name>Mn(2+)</name>
        <dbReference type="ChEBI" id="CHEBI:29035"/>
        <label>3</label>
    </ligand>
</feature>
<feature type="binding site" evidence="2">
    <location>
        <position position="507"/>
    </location>
    <ligand>
        <name>Mn(2+)</name>
        <dbReference type="ChEBI" id="CHEBI:29035"/>
        <label>3</label>
    </ligand>
</feature>
<feature type="splice variant" id="VSP_061124" description="In isoform 2.">
    <original>MSTISIHHVGILRNPLHSKSKRASINKPWSLSLPRSSSASRLVEPC</original>
    <variation>M</variation>
    <location>
        <begin position="1"/>
        <end position="46"/>
    </location>
</feature>
<feature type="sequence conflict" description="In Ref. 1; AGK88257." evidence="8" ref="1">
    <original>N</original>
    <variation>D</variation>
    <location>
        <position position="123"/>
    </location>
</feature>
<feature type="sequence conflict" description="In Ref. 1; AGK88257." evidence="8" ref="1">
    <original>L</original>
    <variation>P</variation>
    <location>
        <position position="166"/>
    </location>
</feature>
<feature type="sequence conflict" description="In Ref. 1; AGK88250." evidence="8" ref="1">
    <original>D</original>
    <variation>Y</variation>
    <location>
        <position position="190"/>
    </location>
</feature>
<feature type="sequence conflict" description="In Ref. 1; AGK88250." evidence="8" ref="1">
    <original>V</original>
    <variation>A</variation>
    <location>
        <position position="207"/>
    </location>
</feature>
<feature type="sequence conflict" description="In Ref. 1; AGK88257." evidence="8" ref="1">
    <original>E</original>
    <variation>G</variation>
    <location>
        <position position="215"/>
    </location>
</feature>
<feature type="sequence conflict" description="In Ref. 1; AGK88250." evidence="8" ref="1">
    <original>QVN</original>
    <variation>KVD</variation>
    <location>
        <begin position="232"/>
        <end position="234"/>
    </location>
</feature>
<feature type="sequence conflict" description="In Ref. 1; AGK88250." evidence="8" ref="1">
    <original>L</original>
    <variation>S</variation>
    <location>
        <position position="245"/>
    </location>
</feature>
<feature type="sequence conflict" description="In Ref. 1; AGK88250." evidence="8" ref="1">
    <original>A</original>
    <variation>V</variation>
    <location>
        <position position="273"/>
    </location>
</feature>
<feature type="sequence conflict" description="In Ref. 1; AGK88250." evidence="8" ref="1">
    <original>K</original>
    <variation>E</variation>
    <location>
        <position position="283"/>
    </location>
</feature>
<feature type="sequence conflict" description="In Ref. 1; AGK88260." evidence="8" ref="1">
    <original>K</original>
    <variation>E</variation>
    <location>
        <position position="286"/>
    </location>
</feature>
<feature type="sequence conflict" description="In Ref. 1; AGK88257." evidence="8" ref="1">
    <original>C</original>
    <variation>R</variation>
    <location>
        <position position="311"/>
    </location>
</feature>
<feature type="sequence conflict" description="In Ref. 1; AGK88250." evidence="8" ref="1">
    <original>YI</original>
    <variation>DT</variation>
    <location>
        <begin position="349"/>
        <end position="350"/>
    </location>
</feature>
<feature type="sequence conflict" description="In Ref. 1; AGK88250." evidence="8" ref="1">
    <original>R</original>
    <variation>S</variation>
    <location>
        <position position="378"/>
    </location>
</feature>
<feature type="sequence conflict" description="In Ref. 1; AGK88250." evidence="8" ref="1">
    <original>H</original>
    <variation>Y</variation>
    <location>
        <position position="399"/>
    </location>
</feature>
<feature type="sequence conflict" description="In Ref. 1; AGK88250." evidence="8" ref="1">
    <original>Q</original>
    <variation>E</variation>
    <location>
        <position position="440"/>
    </location>
</feature>
<feature type="sequence conflict" description="In Ref. 1; AGK88250." evidence="8" ref="1">
    <original>GSLP</original>
    <variation>ASLT</variation>
    <location>
        <begin position="459"/>
        <end position="462"/>
    </location>
</feature>
<feature type="sequence conflict" description="In Ref. 1; AGK88250." evidence="8" ref="1">
    <original>Q</original>
    <variation>R</variation>
    <location>
        <position position="532"/>
    </location>
</feature>
<feature type="sequence conflict" description="In Ref. 1; AGK88250." evidence="8" ref="1">
    <original>REA</original>
    <variation>GET</variation>
    <location>
        <begin position="540"/>
        <end position="542"/>
    </location>
</feature>
<feature type="sequence conflict" description="In Ref. 1; AGK88257." evidence="8" ref="1">
    <original>V</original>
    <variation>A</variation>
    <location>
        <position position="562"/>
    </location>
</feature>
<feature type="sequence conflict" description="In Ref. 1; AGK88250." evidence="8" ref="1">
    <original>I</original>
    <variation>L</variation>
    <location>
        <position position="569"/>
    </location>
</feature>
<feature type="sequence conflict" description="In Ref. 1; AGK88250." evidence="8" ref="1">
    <original>Y</original>
    <variation>F</variation>
    <location>
        <position position="575"/>
    </location>
</feature>
<feature type="sequence conflict" description="In Ref. 1; AGK88250." evidence="8" ref="1">
    <original>RQHVR</original>
    <variation>HQHMG</variation>
    <location>
        <begin position="589"/>
        <end position="593"/>
    </location>
</feature>
<feature type="sequence conflict" description="In Ref. 1; AGK88260." evidence="8" ref="1">
    <original>F</original>
    <variation>L</variation>
    <location>
        <position position="597"/>
    </location>
</feature>
<reference key="1">
    <citation type="journal article" date="2013" name="Planta">
        <title>Genomic characterization, molecular cloning and expression analysis of two terpene synthases from Thymus caespititius (Lamiaceae).</title>
        <authorList>
            <person name="Lima A.S."/>
            <person name="Schimmel J."/>
            <person name="Lukas B."/>
            <person name="Novak J."/>
            <person name="Barroso J.G."/>
            <person name="Figueiredo A.C."/>
            <person name="Pedro L.G."/>
            <person name="Degenhardt J."/>
            <person name="Trindade H."/>
        </authorList>
    </citation>
    <scope>NUCLEOTIDE SEQUENCE [GENOMIC DNA / MRNA] (ISOFORMS 1 AND 2)</scope>
    <scope>FUNCTION</scope>
    <scope>CATALYTIC ACTIVITY</scope>
    <scope>PATHWAY</scope>
    <source>
        <strain>cv. 319</strain>
        <tissue>Flower</tissue>
    </source>
</reference>
<name>ATPS3_THYCA</name>
<evidence type="ECO:0000250" key="1">
    <source>
        <dbReference type="UniProtKB" id="A0A0M3Q1Q3"/>
    </source>
</evidence>
<evidence type="ECO:0000250" key="2">
    <source>
        <dbReference type="UniProtKB" id="A0A1C9J6A7"/>
    </source>
</evidence>
<evidence type="ECO:0000250" key="3">
    <source>
        <dbReference type="UniProtKB" id="E2E2P0"/>
    </source>
</evidence>
<evidence type="ECO:0000250" key="4">
    <source>
        <dbReference type="UniProtKB" id="Q9X839"/>
    </source>
</evidence>
<evidence type="ECO:0000255" key="5"/>
<evidence type="ECO:0000269" key="6">
    <source>
    </source>
</evidence>
<evidence type="ECO:0000303" key="7">
    <source>
    </source>
</evidence>
<evidence type="ECO:0000305" key="8"/>